<name>GLSA_LEGPA</name>
<dbReference type="EC" id="3.5.1.2" evidence="1"/>
<dbReference type="EMBL" id="CR628336">
    <property type="protein sequence ID" value="CAH11459.1"/>
    <property type="molecule type" value="Genomic_DNA"/>
</dbReference>
<dbReference type="RefSeq" id="WP_011212935.1">
    <property type="nucleotide sequence ID" value="NC_006368.1"/>
</dbReference>
<dbReference type="SMR" id="Q5X8E2"/>
<dbReference type="KEGG" id="lpp:lpp0311"/>
<dbReference type="LegioList" id="lpp0311"/>
<dbReference type="HOGENOM" id="CLU_027932_1_0_6"/>
<dbReference type="GO" id="GO:0004359">
    <property type="term" value="F:glutaminase activity"/>
    <property type="evidence" value="ECO:0007669"/>
    <property type="project" value="UniProtKB-UniRule"/>
</dbReference>
<dbReference type="GO" id="GO:0006537">
    <property type="term" value="P:glutamate biosynthetic process"/>
    <property type="evidence" value="ECO:0007669"/>
    <property type="project" value="TreeGrafter"/>
</dbReference>
<dbReference type="GO" id="GO:0006543">
    <property type="term" value="P:glutamine catabolic process"/>
    <property type="evidence" value="ECO:0007669"/>
    <property type="project" value="TreeGrafter"/>
</dbReference>
<dbReference type="Gene3D" id="3.40.710.10">
    <property type="entry name" value="DD-peptidase/beta-lactamase superfamily"/>
    <property type="match status" value="1"/>
</dbReference>
<dbReference type="HAMAP" id="MF_00313">
    <property type="entry name" value="Glutaminase"/>
    <property type="match status" value="1"/>
</dbReference>
<dbReference type="InterPro" id="IPR012338">
    <property type="entry name" value="Beta-lactam/transpept-like"/>
</dbReference>
<dbReference type="InterPro" id="IPR015868">
    <property type="entry name" value="Glutaminase"/>
</dbReference>
<dbReference type="NCBIfam" id="TIGR03814">
    <property type="entry name" value="Gln_ase"/>
    <property type="match status" value="1"/>
</dbReference>
<dbReference type="PANTHER" id="PTHR12544">
    <property type="entry name" value="GLUTAMINASE"/>
    <property type="match status" value="1"/>
</dbReference>
<dbReference type="PANTHER" id="PTHR12544:SF29">
    <property type="entry name" value="GLUTAMINASE"/>
    <property type="match status" value="1"/>
</dbReference>
<dbReference type="Pfam" id="PF04960">
    <property type="entry name" value="Glutaminase"/>
    <property type="match status" value="1"/>
</dbReference>
<dbReference type="SUPFAM" id="SSF56601">
    <property type="entry name" value="beta-lactamase/transpeptidase-like"/>
    <property type="match status" value="1"/>
</dbReference>
<evidence type="ECO:0000255" key="1">
    <source>
        <dbReference type="HAMAP-Rule" id="MF_00313"/>
    </source>
</evidence>
<reference key="1">
    <citation type="journal article" date="2004" name="Nat. Genet.">
        <title>Evidence in the Legionella pneumophila genome for exploitation of host cell functions and high genome plasticity.</title>
        <authorList>
            <person name="Cazalet C."/>
            <person name="Rusniok C."/>
            <person name="Brueggemann H."/>
            <person name="Zidane N."/>
            <person name="Magnier A."/>
            <person name="Ma L."/>
            <person name="Tichit M."/>
            <person name="Jarraud S."/>
            <person name="Bouchier C."/>
            <person name="Vandenesch F."/>
            <person name="Kunst F."/>
            <person name="Etienne J."/>
            <person name="Glaser P."/>
            <person name="Buchrieser C."/>
        </authorList>
    </citation>
    <scope>NUCLEOTIDE SEQUENCE [LARGE SCALE GENOMIC DNA]</scope>
    <source>
        <strain>Paris</strain>
    </source>
</reference>
<keyword id="KW-0378">Hydrolase</keyword>
<feature type="chain" id="PRO_1000079073" description="Glutaminase">
    <location>
        <begin position="1"/>
        <end position="310"/>
    </location>
</feature>
<feature type="binding site" evidence="1">
    <location>
        <position position="67"/>
    </location>
    <ligand>
        <name>substrate</name>
    </ligand>
</feature>
<feature type="binding site" evidence="1">
    <location>
        <position position="118"/>
    </location>
    <ligand>
        <name>substrate</name>
    </ligand>
</feature>
<feature type="binding site" evidence="1">
    <location>
        <position position="161"/>
    </location>
    <ligand>
        <name>substrate</name>
    </ligand>
</feature>
<feature type="binding site" evidence="1">
    <location>
        <position position="168"/>
    </location>
    <ligand>
        <name>substrate</name>
    </ligand>
</feature>
<feature type="binding site" evidence="1">
    <location>
        <position position="192"/>
    </location>
    <ligand>
        <name>substrate</name>
    </ligand>
</feature>
<feature type="binding site" evidence="1">
    <location>
        <position position="244"/>
    </location>
    <ligand>
        <name>substrate</name>
    </ligand>
</feature>
<feature type="binding site" evidence="1">
    <location>
        <position position="262"/>
    </location>
    <ligand>
        <name>substrate</name>
    </ligand>
</feature>
<gene>
    <name evidence="1" type="primary">glsA</name>
    <name type="ordered locus">lpp0311</name>
</gene>
<organism>
    <name type="scientific">Legionella pneumophila (strain Paris)</name>
    <dbReference type="NCBI Taxonomy" id="297246"/>
    <lineage>
        <taxon>Bacteria</taxon>
        <taxon>Pseudomonadati</taxon>
        <taxon>Pseudomonadota</taxon>
        <taxon>Gammaproteobacteria</taxon>
        <taxon>Legionellales</taxon>
        <taxon>Legionellaceae</taxon>
        <taxon>Legionella</taxon>
    </lineage>
</organism>
<sequence>MSSKLLTIQLLEELVHAAELNQEGKTADYIPELANVNQELTAIAVQPLGEKTLAYSNNPLHPVTLQSTGKMIPLIGLLEEFGADQLFEWVKVEPSGDDFASITRLEQFGPKPSNPMLNAGAIALCSRIPGVGEQQFRWLEHWVQKLFNQRLSINPLVFASEKRTGNRNRALAYLLKSRSNLGADVHETLDLYFALCSYEAMLDQMLYLPAVLANKGQDPDTGEQILSIETCKITLAIMATCGLYDETGTHMVKTGMPAKSGVSGYTIAVVPGKAGIVVLSPRVNAKGNSIRGEIMLEGLSKAMNWHFALP</sequence>
<comment type="catalytic activity">
    <reaction evidence="1">
        <text>L-glutamine + H2O = L-glutamate + NH4(+)</text>
        <dbReference type="Rhea" id="RHEA:15889"/>
        <dbReference type="ChEBI" id="CHEBI:15377"/>
        <dbReference type="ChEBI" id="CHEBI:28938"/>
        <dbReference type="ChEBI" id="CHEBI:29985"/>
        <dbReference type="ChEBI" id="CHEBI:58359"/>
        <dbReference type="EC" id="3.5.1.2"/>
    </reaction>
</comment>
<comment type="subunit">
    <text evidence="1">Homotetramer.</text>
</comment>
<comment type="similarity">
    <text evidence="1">Belongs to the glutaminase family.</text>
</comment>
<proteinExistence type="inferred from homology"/>
<protein>
    <recommendedName>
        <fullName evidence="1">Glutaminase</fullName>
        <ecNumber evidence="1">3.5.1.2</ecNumber>
    </recommendedName>
</protein>
<accession>Q5X8E2</accession>